<comment type="function">
    <text evidence="1 4">ATP-dependent transporter of the ATP-binding cassette (ABC) family which transports various molecules including bioamines, neurotransmitters and metabolic intermediates (By similarity). In the eye and probably in association with w/white, required for the transport of the eye red pigment precursor, guanine, into pigment cell granules (PubMed:7635284). In Malpighian tubules, involved in guanine uptake (By similarity). Probably in association with w/white, involved in aging-induced intestinal stem cell proliferation in the midgut by regulating tetrahydrofolate transport (By similarity).</text>
</comment>
<comment type="catalytic activity">
    <reaction evidence="1">
        <text>guanine(out) + ATP + H2O = guanine(in) + ADP + phosphate + H(+)</text>
        <dbReference type="Rhea" id="RHEA:20832"/>
        <dbReference type="ChEBI" id="CHEBI:15377"/>
        <dbReference type="ChEBI" id="CHEBI:15378"/>
        <dbReference type="ChEBI" id="CHEBI:16235"/>
        <dbReference type="ChEBI" id="CHEBI:30616"/>
        <dbReference type="ChEBI" id="CHEBI:43474"/>
        <dbReference type="ChEBI" id="CHEBI:456216"/>
        <dbReference type="EC" id="7.6.2.6"/>
    </reaction>
</comment>
<comment type="catalytic activity">
    <reaction evidence="1">
        <text>riboflavin(in) + ATP + H2O = riboflavin(out) + ADP + phosphate + H(+)</text>
        <dbReference type="Rhea" id="RHEA:61352"/>
        <dbReference type="ChEBI" id="CHEBI:15377"/>
        <dbReference type="ChEBI" id="CHEBI:15378"/>
        <dbReference type="ChEBI" id="CHEBI:30616"/>
        <dbReference type="ChEBI" id="CHEBI:43474"/>
        <dbReference type="ChEBI" id="CHEBI:57986"/>
        <dbReference type="ChEBI" id="CHEBI:456216"/>
    </reaction>
</comment>
<comment type="catalytic activity">
    <reaction evidence="1">
        <text>(6S)-5,6,7,8-tetrahydrofolate(out) + ATP + H2O = (6S)-5,6,7,8-tetrahydrofolate(in) + ADP + phosphate + H(+)</text>
        <dbReference type="Rhea" id="RHEA:68592"/>
        <dbReference type="ChEBI" id="CHEBI:15377"/>
        <dbReference type="ChEBI" id="CHEBI:15378"/>
        <dbReference type="ChEBI" id="CHEBI:30616"/>
        <dbReference type="ChEBI" id="CHEBI:43474"/>
        <dbReference type="ChEBI" id="CHEBI:57453"/>
        <dbReference type="ChEBI" id="CHEBI:456216"/>
    </reaction>
</comment>
<comment type="subunit">
    <text evidence="1">May form a heterodimer with w/white.</text>
</comment>
<comment type="subcellular location">
    <subcellularLocation>
        <location evidence="2">Membrane</location>
        <topology evidence="2">Multi-pass membrane protein</topology>
    </subcellularLocation>
</comment>
<comment type="tissue specificity">
    <text evidence="4">Expressed in eyes.</text>
</comment>
<comment type="similarity">
    <text evidence="6">Belongs to the ABC transporter superfamily. ABCG family. Eye pigment precursor importer (TC 3.A.1.204) subfamily.</text>
</comment>
<feature type="chain" id="PRO_0000093376" description="Protein brown">
    <location>
        <begin position="1"/>
        <end position="668"/>
    </location>
</feature>
<feature type="topological domain" description="Cytoplasmic" evidence="6">
    <location>
        <begin position="1"/>
        <end position="412"/>
    </location>
</feature>
<feature type="transmembrane region" description="Helical" evidence="2">
    <location>
        <begin position="413"/>
        <end position="433"/>
    </location>
</feature>
<feature type="topological domain" description="Extracellular" evidence="6">
    <location>
        <begin position="434"/>
        <end position="453"/>
    </location>
</feature>
<feature type="transmembrane region" description="Helical" evidence="2">
    <location>
        <begin position="454"/>
        <end position="474"/>
    </location>
</feature>
<feature type="topological domain" description="Cytoplasmic" evidence="6">
    <location>
        <begin position="475"/>
        <end position="490"/>
    </location>
</feature>
<feature type="transmembrane region" description="Helical" evidence="2">
    <location>
        <begin position="491"/>
        <end position="511"/>
    </location>
</feature>
<feature type="topological domain" description="Extracellular" evidence="6">
    <location>
        <begin position="512"/>
        <end position="524"/>
    </location>
</feature>
<feature type="transmembrane region" description="Helical" evidence="2">
    <location>
        <begin position="525"/>
        <end position="545"/>
    </location>
</feature>
<feature type="topological domain" description="Cytoplasmic" evidence="6">
    <location>
        <begin position="546"/>
        <end position="561"/>
    </location>
</feature>
<feature type="transmembrane region" description="Helical" evidence="2">
    <location>
        <begin position="562"/>
        <end position="582"/>
    </location>
</feature>
<feature type="topological domain" description="Extracellular" evidence="6">
    <location>
        <begin position="583"/>
        <end position="637"/>
    </location>
</feature>
<feature type="transmembrane region" description="Helical" evidence="2">
    <location>
        <begin position="638"/>
        <end position="658"/>
    </location>
</feature>
<feature type="topological domain" description="Cytoplasmic" evidence="6">
    <location>
        <begin position="659"/>
        <end position="668"/>
    </location>
</feature>
<feature type="domain" description="ABC transporter" evidence="3">
    <location>
        <begin position="31"/>
        <end position="328"/>
    </location>
</feature>
<feature type="binding site" evidence="3">
    <location>
        <begin position="63"/>
        <end position="70"/>
    </location>
    <ligand>
        <name>ATP</name>
        <dbReference type="ChEBI" id="CHEBI:30616"/>
    </ligand>
</feature>
<proteinExistence type="evidence at transcript level"/>
<evidence type="ECO:0000250" key="1">
    <source>
        <dbReference type="UniProtKB" id="P12428"/>
    </source>
</evidence>
<evidence type="ECO:0000255" key="2"/>
<evidence type="ECO:0000255" key="3">
    <source>
        <dbReference type="PROSITE-ProRule" id="PRU00434"/>
    </source>
</evidence>
<evidence type="ECO:0000269" key="4">
    <source>
    </source>
</evidence>
<evidence type="ECO:0000303" key="5">
    <source>
    </source>
</evidence>
<evidence type="ECO:0000305" key="6"/>
<keyword id="KW-0067">ATP-binding</keyword>
<keyword id="KW-0472">Membrane</keyword>
<keyword id="KW-0547">Nucleotide-binding</keyword>
<keyword id="KW-0608">Pigment</keyword>
<keyword id="KW-1278">Translocase</keyword>
<keyword id="KW-0812">Transmembrane</keyword>
<keyword id="KW-1133">Transmembrane helix</keyword>
<keyword id="KW-0813">Transport</keyword>
<protein>
    <recommendedName>
        <fullName evidence="5">Protein brown</fullName>
        <ecNumber evidence="1">7.6.2.-</ecNumber>
        <ecNumber evidence="1">7.6.2.6</ecNumber>
    </recommendedName>
    <alternativeName>
        <fullName evidence="6">ATP-binding cassette transporter sub-family G member brown</fullName>
    </alternativeName>
    <alternativeName>
        <fullName evidence="6">Broad substrate specificity ATP-binding cassette transporter brown</fullName>
    </alternativeName>
</protein>
<name>BROWN_DROVI</name>
<gene>
    <name evidence="5" type="primary">bw</name>
</gene>
<sequence>MPMDEGDAQGSLLLEWKQLNYYVPAQEQSNYSFWNECRKQRELGILHDVSGHLKTGDLIAILGGSGAGKTTLLAAISQRLRGNLTGDVVLNGMAMERDQMTRISSFLREFEINVKTFTAYDDLYFMSHFKMHRRTTKSEKRQAVSDLLLAVGLRDAAHTRIQQLSGGERKRLSLAEELITDPIFLFCDEPTTGLDSFSAYTVIKTLRHLCTRRRIAKHSLTQVYGEDSFATPSDNGSSGSNSIEMEIVDNSHESLLQAMKELPTLGVLNNSPNGTQKKAAICSIHQPTSDIFELFTHIILMDGGRIVYQGRTEQAAKFFTEGFMQPKNCNPADFYLKTLADGQGSKNAGELLRAKYEHETDGLYSGSWLLARNYSGDYMKHVQNFKKIRWIYQVYLLVIRFMTEDLANIRSGLIGFGFFMTTAVTLSLMYSGVGGLTQRTVQDVGGSIFMLSNEMIFTFSYGVTYIFPAALPIIRREVAEGTYSLSAYYVALVLSFVPVAFFKGYMFLSVIYASIYYTRGFLLYITMGFLMSLSAIAAVGYGVFLSSLFETDKMASECAAPFDLIFLIFGGTYMNVDSVPLLKYFSLFFYSNEALMYNFWIDIDNIACXVNDEHPCCQTGLEVLQQASFRTADYTFWLDCASLLVVALVFHIVSFTLIRRYINRSGYY</sequence>
<reference key="1">
    <citation type="journal article" date="1995" name="Genetics">
        <title>Conservation of brown gene trans-inactivation in Drosophila.</title>
        <authorList>
            <person name="Martin-Morris L.E."/>
            <person name="Henikoff S."/>
        </authorList>
    </citation>
    <scope>NUCLEOTIDE SEQUENCE [GENOMIC DNA]</scope>
    <scope>FUNCTION</scope>
    <scope>TISSUE SPECIFICITY</scope>
</reference>
<dbReference type="EC" id="7.6.2.-" evidence="1"/>
<dbReference type="EC" id="7.6.2.6" evidence="1"/>
<dbReference type="EMBL" id="L37035">
    <property type="protein sequence ID" value="AAA64466.1"/>
    <property type="molecule type" value="Genomic_DNA"/>
</dbReference>
<dbReference type="PIR" id="S55023">
    <property type="entry name" value="S55023"/>
</dbReference>
<dbReference type="eggNOG" id="KOG0061">
    <property type="taxonomic scope" value="Eukaryota"/>
</dbReference>
<dbReference type="OrthoDB" id="66620at2759"/>
<dbReference type="GO" id="GO:0005886">
    <property type="term" value="C:plasma membrane"/>
    <property type="evidence" value="ECO:0007669"/>
    <property type="project" value="TreeGrafter"/>
</dbReference>
<dbReference type="GO" id="GO:0140359">
    <property type="term" value="F:ABC-type transporter activity"/>
    <property type="evidence" value="ECO:0007669"/>
    <property type="project" value="InterPro"/>
</dbReference>
<dbReference type="GO" id="GO:0005524">
    <property type="term" value="F:ATP binding"/>
    <property type="evidence" value="ECO:0007669"/>
    <property type="project" value="UniProtKB-KW"/>
</dbReference>
<dbReference type="GO" id="GO:0016887">
    <property type="term" value="F:ATP hydrolysis activity"/>
    <property type="evidence" value="ECO:0007669"/>
    <property type="project" value="InterPro"/>
</dbReference>
<dbReference type="GO" id="GO:0031409">
    <property type="term" value="F:pigment binding"/>
    <property type="evidence" value="ECO:0007669"/>
    <property type="project" value="UniProtKB-KW"/>
</dbReference>
<dbReference type="Gene3D" id="3.40.50.300">
    <property type="entry name" value="P-loop containing nucleotide triphosphate hydrolases"/>
    <property type="match status" value="1"/>
</dbReference>
<dbReference type="InterPro" id="IPR003593">
    <property type="entry name" value="AAA+_ATPase"/>
</dbReference>
<dbReference type="InterPro" id="IPR013525">
    <property type="entry name" value="ABC2_TM"/>
</dbReference>
<dbReference type="InterPro" id="IPR003439">
    <property type="entry name" value="ABC_transporter-like_ATP-bd"/>
</dbReference>
<dbReference type="InterPro" id="IPR017871">
    <property type="entry name" value="ABC_transporter-like_CS"/>
</dbReference>
<dbReference type="InterPro" id="IPR050352">
    <property type="entry name" value="ABCG_transporters"/>
</dbReference>
<dbReference type="InterPro" id="IPR027417">
    <property type="entry name" value="P-loop_NTPase"/>
</dbReference>
<dbReference type="InterPro" id="IPR005284">
    <property type="entry name" value="Pigment_permease/Abcg"/>
</dbReference>
<dbReference type="NCBIfam" id="TIGR00955">
    <property type="entry name" value="3a01204"/>
    <property type="match status" value="1"/>
</dbReference>
<dbReference type="PANTHER" id="PTHR48041">
    <property type="entry name" value="ABC TRANSPORTER G FAMILY MEMBER 28"/>
    <property type="match status" value="1"/>
</dbReference>
<dbReference type="PANTHER" id="PTHR48041:SF116">
    <property type="entry name" value="PROTEIN BROWN"/>
    <property type="match status" value="1"/>
</dbReference>
<dbReference type="Pfam" id="PF01061">
    <property type="entry name" value="ABC2_membrane"/>
    <property type="match status" value="1"/>
</dbReference>
<dbReference type="Pfam" id="PF00005">
    <property type="entry name" value="ABC_tran"/>
    <property type="match status" value="1"/>
</dbReference>
<dbReference type="SMART" id="SM00382">
    <property type="entry name" value="AAA"/>
    <property type="match status" value="1"/>
</dbReference>
<dbReference type="SUPFAM" id="SSF52540">
    <property type="entry name" value="P-loop containing nucleoside triphosphate hydrolases"/>
    <property type="match status" value="2"/>
</dbReference>
<dbReference type="PROSITE" id="PS00211">
    <property type="entry name" value="ABC_TRANSPORTER_1"/>
    <property type="match status" value="1"/>
</dbReference>
<dbReference type="PROSITE" id="PS50893">
    <property type="entry name" value="ABC_TRANSPORTER_2"/>
    <property type="match status" value="1"/>
</dbReference>
<organism>
    <name type="scientific">Drosophila virilis</name>
    <name type="common">Fruit fly</name>
    <dbReference type="NCBI Taxonomy" id="7244"/>
    <lineage>
        <taxon>Eukaryota</taxon>
        <taxon>Metazoa</taxon>
        <taxon>Ecdysozoa</taxon>
        <taxon>Arthropoda</taxon>
        <taxon>Hexapoda</taxon>
        <taxon>Insecta</taxon>
        <taxon>Pterygota</taxon>
        <taxon>Neoptera</taxon>
        <taxon>Endopterygota</taxon>
        <taxon>Diptera</taxon>
        <taxon>Brachycera</taxon>
        <taxon>Muscomorpha</taxon>
        <taxon>Ephydroidea</taxon>
        <taxon>Drosophilidae</taxon>
        <taxon>Drosophila</taxon>
    </lineage>
</organism>
<accession>Q24739</accession>